<feature type="chain" id="PRO_0000237255" description="Large ribosomal subunit protein uL2">
    <location>
        <begin position="1"/>
        <end position="294"/>
    </location>
</feature>
<feature type="region of interest" description="Disordered" evidence="2">
    <location>
        <begin position="1"/>
        <end position="37"/>
    </location>
</feature>
<feature type="region of interest" description="Disordered" evidence="2">
    <location>
        <begin position="228"/>
        <end position="294"/>
    </location>
</feature>
<feature type="compositionally biased region" description="Polar residues" evidence="2">
    <location>
        <begin position="10"/>
        <end position="22"/>
    </location>
</feature>
<feature type="compositionally biased region" description="Basic and acidic residues" evidence="2">
    <location>
        <begin position="23"/>
        <end position="37"/>
    </location>
</feature>
<feature type="compositionally biased region" description="Basic residues" evidence="2">
    <location>
        <begin position="264"/>
        <end position="285"/>
    </location>
</feature>
<proteinExistence type="inferred from homology"/>
<sequence>MGIRTFRPYTPSTRHMTVSNFEELSRDENGKRPRPEKSLLQFIHRKKGRNNRGVITCRHRGGGHKRLYRIIDFRRDKRGIPATVKTIEYDPNRSARICLVEYEDGEKRYILAPRNLEVGATIMAGPDAPFELGNAMPLERIPLGTVVHNVELYPGRGGQIVRAAGAGAQVVAKEGKYVSLKLPSGEVRMIRGECYATIGQVGNVDHSNLSLGKAGRSRWLGRRPHVRGSVMNPVDHPHGGGEGKAPIGRSTPVTPWGKPTLGYKTRKRNKPSNKFIVRGRRRGGRRDKSGRAAQ</sequence>
<gene>
    <name evidence="1" type="primary">rplB</name>
    <name evidence="1" type="synonym">rpl2</name>
    <name type="ordered locus">CYA_1175</name>
</gene>
<protein>
    <recommendedName>
        <fullName evidence="1">Large ribosomal subunit protein uL2</fullName>
    </recommendedName>
    <alternativeName>
        <fullName evidence="3">50S ribosomal protein L2</fullName>
    </alternativeName>
</protein>
<accession>Q2JV84</accession>
<reference key="1">
    <citation type="journal article" date="2007" name="ISME J.">
        <title>Population level functional diversity in a microbial community revealed by comparative genomic and metagenomic analyses.</title>
        <authorList>
            <person name="Bhaya D."/>
            <person name="Grossman A.R."/>
            <person name="Steunou A.-S."/>
            <person name="Khuri N."/>
            <person name="Cohan F.M."/>
            <person name="Hamamura N."/>
            <person name="Melendrez M.C."/>
            <person name="Bateson M.M."/>
            <person name="Ward D.M."/>
            <person name="Heidelberg J.F."/>
        </authorList>
    </citation>
    <scope>NUCLEOTIDE SEQUENCE [LARGE SCALE GENOMIC DNA]</scope>
    <source>
        <strain>JA-3-3Ab</strain>
    </source>
</reference>
<evidence type="ECO:0000255" key="1">
    <source>
        <dbReference type="HAMAP-Rule" id="MF_01320"/>
    </source>
</evidence>
<evidence type="ECO:0000256" key="2">
    <source>
        <dbReference type="SAM" id="MobiDB-lite"/>
    </source>
</evidence>
<evidence type="ECO:0000305" key="3"/>
<name>RL2_SYNJA</name>
<comment type="function">
    <text evidence="1">One of the primary rRNA binding proteins. Required for association of the 30S and 50S subunits to form the 70S ribosome, for tRNA binding and peptide bond formation. It has been suggested to have peptidyltransferase activity; this is somewhat controversial. Makes several contacts with the 16S rRNA in the 70S ribosome.</text>
</comment>
<comment type="subunit">
    <text evidence="1">Part of the 50S ribosomal subunit. Forms a bridge to the 30S subunit in the 70S ribosome.</text>
</comment>
<comment type="similarity">
    <text evidence="1">Belongs to the universal ribosomal protein uL2 family.</text>
</comment>
<keyword id="KW-0687">Ribonucleoprotein</keyword>
<keyword id="KW-0689">Ribosomal protein</keyword>
<keyword id="KW-0694">RNA-binding</keyword>
<keyword id="KW-0699">rRNA-binding</keyword>
<dbReference type="EMBL" id="CP000239">
    <property type="protein sequence ID" value="ABC99363.1"/>
    <property type="molecule type" value="Genomic_DNA"/>
</dbReference>
<dbReference type="RefSeq" id="WP_011430044.1">
    <property type="nucleotide sequence ID" value="NC_007775.1"/>
</dbReference>
<dbReference type="SMR" id="Q2JV84"/>
<dbReference type="STRING" id="321327.CYA_1175"/>
<dbReference type="KEGG" id="cya:CYA_1175"/>
<dbReference type="eggNOG" id="COG0090">
    <property type="taxonomic scope" value="Bacteria"/>
</dbReference>
<dbReference type="HOGENOM" id="CLU_036235_2_1_3"/>
<dbReference type="OrthoDB" id="9778722at2"/>
<dbReference type="Proteomes" id="UP000008818">
    <property type="component" value="Chromosome"/>
</dbReference>
<dbReference type="GO" id="GO:0015934">
    <property type="term" value="C:large ribosomal subunit"/>
    <property type="evidence" value="ECO:0007669"/>
    <property type="project" value="InterPro"/>
</dbReference>
<dbReference type="GO" id="GO:0019843">
    <property type="term" value="F:rRNA binding"/>
    <property type="evidence" value="ECO:0007669"/>
    <property type="project" value="UniProtKB-UniRule"/>
</dbReference>
<dbReference type="GO" id="GO:0003735">
    <property type="term" value="F:structural constituent of ribosome"/>
    <property type="evidence" value="ECO:0007669"/>
    <property type="project" value="InterPro"/>
</dbReference>
<dbReference type="GO" id="GO:0016740">
    <property type="term" value="F:transferase activity"/>
    <property type="evidence" value="ECO:0007669"/>
    <property type="project" value="InterPro"/>
</dbReference>
<dbReference type="GO" id="GO:0002181">
    <property type="term" value="P:cytoplasmic translation"/>
    <property type="evidence" value="ECO:0007669"/>
    <property type="project" value="TreeGrafter"/>
</dbReference>
<dbReference type="FunFam" id="2.30.30.30:FF:000001">
    <property type="entry name" value="50S ribosomal protein L2"/>
    <property type="match status" value="1"/>
</dbReference>
<dbReference type="FunFam" id="2.40.50.140:FF:000003">
    <property type="entry name" value="50S ribosomal protein L2"/>
    <property type="match status" value="1"/>
</dbReference>
<dbReference type="FunFam" id="4.10.950.10:FF:000001">
    <property type="entry name" value="50S ribosomal protein L2"/>
    <property type="match status" value="1"/>
</dbReference>
<dbReference type="Gene3D" id="2.30.30.30">
    <property type="match status" value="1"/>
</dbReference>
<dbReference type="Gene3D" id="2.40.50.140">
    <property type="entry name" value="Nucleic acid-binding proteins"/>
    <property type="match status" value="1"/>
</dbReference>
<dbReference type="Gene3D" id="4.10.950.10">
    <property type="entry name" value="Ribosomal protein L2, domain 3"/>
    <property type="match status" value="1"/>
</dbReference>
<dbReference type="HAMAP" id="MF_01320_B">
    <property type="entry name" value="Ribosomal_uL2_B"/>
    <property type="match status" value="1"/>
</dbReference>
<dbReference type="InterPro" id="IPR012340">
    <property type="entry name" value="NA-bd_OB-fold"/>
</dbReference>
<dbReference type="InterPro" id="IPR014722">
    <property type="entry name" value="Rib_uL2_dom2"/>
</dbReference>
<dbReference type="InterPro" id="IPR002171">
    <property type="entry name" value="Ribosomal_uL2"/>
</dbReference>
<dbReference type="InterPro" id="IPR005880">
    <property type="entry name" value="Ribosomal_uL2_bac/org-type"/>
</dbReference>
<dbReference type="InterPro" id="IPR022669">
    <property type="entry name" value="Ribosomal_uL2_C"/>
</dbReference>
<dbReference type="InterPro" id="IPR022671">
    <property type="entry name" value="Ribosomal_uL2_CS"/>
</dbReference>
<dbReference type="InterPro" id="IPR014726">
    <property type="entry name" value="Ribosomal_uL2_dom3"/>
</dbReference>
<dbReference type="InterPro" id="IPR022666">
    <property type="entry name" value="Ribosomal_uL2_RNA-bd_dom"/>
</dbReference>
<dbReference type="InterPro" id="IPR008991">
    <property type="entry name" value="Translation_prot_SH3-like_sf"/>
</dbReference>
<dbReference type="NCBIfam" id="TIGR01171">
    <property type="entry name" value="rplB_bact"/>
    <property type="match status" value="1"/>
</dbReference>
<dbReference type="PANTHER" id="PTHR13691:SF5">
    <property type="entry name" value="LARGE RIBOSOMAL SUBUNIT PROTEIN UL2M"/>
    <property type="match status" value="1"/>
</dbReference>
<dbReference type="PANTHER" id="PTHR13691">
    <property type="entry name" value="RIBOSOMAL PROTEIN L2"/>
    <property type="match status" value="1"/>
</dbReference>
<dbReference type="Pfam" id="PF00181">
    <property type="entry name" value="Ribosomal_L2"/>
    <property type="match status" value="1"/>
</dbReference>
<dbReference type="Pfam" id="PF03947">
    <property type="entry name" value="Ribosomal_L2_C"/>
    <property type="match status" value="1"/>
</dbReference>
<dbReference type="PIRSF" id="PIRSF002158">
    <property type="entry name" value="Ribosomal_L2"/>
    <property type="match status" value="1"/>
</dbReference>
<dbReference type="SMART" id="SM01383">
    <property type="entry name" value="Ribosomal_L2"/>
    <property type="match status" value="1"/>
</dbReference>
<dbReference type="SMART" id="SM01382">
    <property type="entry name" value="Ribosomal_L2_C"/>
    <property type="match status" value="1"/>
</dbReference>
<dbReference type="SUPFAM" id="SSF50249">
    <property type="entry name" value="Nucleic acid-binding proteins"/>
    <property type="match status" value="1"/>
</dbReference>
<dbReference type="SUPFAM" id="SSF50104">
    <property type="entry name" value="Translation proteins SH3-like domain"/>
    <property type="match status" value="1"/>
</dbReference>
<dbReference type="PROSITE" id="PS00467">
    <property type="entry name" value="RIBOSOMAL_L2"/>
    <property type="match status" value="1"/>
</dbReference>
<organism>
    <name type="scientific">Synechococcus sp. (strain JA-3-3Ab)</name>
    <name type="common">Cyanobacteria bacterium Yellowstone A-Prime</name>
    <dbReference type="NCBI Taxonomy" id="321327"/>
    <lineage>
        <taxon>Bacteria</taxon>
        <taxon>Bacillati</taxon>
        <taxon>Cyanobacteriota</taxon>
        <taxon>Cyanophyceae</taxon>
        <taxon>Synechococcales</taxon>
        <taxon>Synechococcaceae</taxon>
        <taxon>Synechococcus</taxon>
    </lineage>
</organism>